<accession>P94190</accession>
<accession>A4SS97</accession>
<dbReference type="EMBL" id="U83688">
    <property type="protein sequence ID" value="AAB41053.1"/>
    <property type="molecule type" value="Genomic_DNA"/>
</dbReference>
<dbReference type="EMBL" id="CP000644">
    <property type="protein sequence ID" value="ABO91769.1"/>
    <property type="molecule type" value="Genomic_DNA"/>
</dbReference>
<dbReference type="PIR" id="JC5198">
    <property type="entry name" value="JC5198"/>
</dbReference>
<dbReference type="RefSeq" id="WP_005315774.1">
    <property type="nucleotide sequence ID" value="NC_009348.1"/>
</dbReference>
<dbReference type="SMR" id="P94190"/>
<dbReference type="STRING" id="29491.GCA_000820065_04196"/>
<dbReference type="KEGG" id="asa:ASA_3809"/>
<dbReference type="eggNOG" id="COG0468">
    <property type="taxonomic scope" value="Bacteria"/>
</dbReference>
<dbReference type="HOGENOM" id="CLU_040469_3_2_6"/>
<dbReference type="Proteomes" id="UP000000225">
    <property type="component" value="Chromosome"/>
</dbReference>
<dbReference type="GO" id="GO:0005829">
    <property type="term" value="C:cytosol"/>
    <property type="evidence" value="ECO:0007669"/>
    <property type="project" value="TreeGrafter"/>
</dbReference>
<dbReference type="GO" id="GO:0005524">
    <property type="term" value="F:ATP binding"/>
    <property type="evidence" value="ECO:0007669"/>
    <property type="project" value="UniProtKB-UniRule"/>
</dbReference>
<dbReference type="GO" id="GO:0016887">
    <property type="term" value="F:ATP hydrolysis activity"/>
    <property type="evidence" value="ECO:0007669"/>
    <property type="project" value="InterPro"/>
</dbReference>
<dbReference type="GO" id="GO:0140664">
    <property type="term" value="F:ATP-dependent DNA damage sensor activity"/>
    <property type="evidence" value="ECO:0007669"/>
    <property type="project" value="InterPro"/>
</dbReference>
<dbReference type="GO" id="GO:0003684">
    <property type="term" value="F:damaged DNA binding"/>
    <property type="evidence" value="ECO:0007669"/>
    <property type="project" value="UniProtKB-UniRule"/>
</dbReference>
<dbReference type="GO" id="GO:0003697">
    <property type="term" value="F:single-stranded DNA binding"/>
    <property type="evidence" value="ECO:0007669"/>
    <property type="project" value="UniProtKB-UniRule"/>
</dbReference>
<dbReference type="GO" id="GO:0006310">
    <property type="term" value="P:DNA recombination"/>
    <property type="evidence" value="ECO:0007669"/>
    <property type="project" value="UniProtKB-UniRule"/>
</dbReference>
<dbReference type="GO" id="GO:0006281">
    <property type="term" value="P:DNA repair"/>
    <property type="evidence" value="ECO:0007669"/>
    <property type="project" value="UniProtKB-UniRule"/>
</dbReference>
<dbReference type="GO" id="GO:0009432">
    <property type="term" value="P:SOS response"/>
    <property type="evidence" value="ECO:0007669"/>
    <property type="project" value="UniProtKB-UniRule"/>
</dbReference>
<dbReference type="CDD" id="cd00983">
    <property type="entry name" value="RecA"/>
    <property type="match status" value="1"/>
</dbReference>
<dbReference type="FunFam" id="3.40.50.300:FF:000087">
    <property type="entry name" value="Recombinase RecA"/>
    <property type="match status" value="1"/>
</dbReference>
<dbReference type="Gene3D" id="3.40.50.300">
    <property type="entry name" value="P-loop containing nucleotide triphosphate hydrolases"/>
    <property type="match status" value="1"/>
</dbReference>
<dbReference type="HAMAP" id="MF_00268">
    <property type="entry name" value="RecA"/>
    <property type="match status" value="1"/>
</dbReference>
<dbReference type="InterPro" id="IPR003593">
    <property type="entry name" value="AAA+_ATPase"/>
</dbReference>
<dbReference type="InterPro" id="IPR013765">
    <property type="entry name" value="DNA_recomb/repair_RecA"/>
</dbReference>
<dbReference type="InterPro" id="IPR020584">
    <property type="entry name" value="DNA_recomb/repair_RecA_CS"/>
</dbReference>
<dbReference type="InterPro" id="IPR027417">
    <property type="entry name" value="P-loop_NTPase"/>
</dbReference>
<dbReference type="InterPro" id="IPR049261">
    <property type="entry name" value="RecA-like_C"/>
</dbReference>
<dbReference type="InterPro" id="IPR049428">
    <property type="entry name" value="RecA-like_N"/>
</dbReference>
<dbReference type="InterPro" id="IPR020588">
    <property type="entry name" value="RecA_ATP-bd"/>
</dbReference>
<dbReference type="InterPro" id="IPR023400">
    <property type="entry name" value="RecA_C_sf"/>
</dbReference>
<dbReference type="InterPro" id="IPR020587">
    <property type="entry name" value="RecA_monomer-monomer_interface"/>
</dbReference>
<dbReference type="NCBIfam" id="TIGR02012">
    <property type="entry name" value="tigrfam_recA"/>
    <property type="match status" value="1"/>
</dbReference>
<dbReference type="PANTHER" id="PTHR45900:SF1">
    <property type="entry name" value="MITOCHONDRIAL DNA REPAIR PROTEIN RECA HOMOLOG-RELATED"/>
    <property type="match status" value="1"/>
</dbReference>
<dbReference type="PANTHER" id="PTHR45900">
    <property type="entry name" value="RECA"/>
    <property type="match status" value="1"/>
</dbReference>
<dbReference type="Pfam" id="PF00154">
    <property type="entry name" value="RecA"/>
    <property type="match status" value="1"/>
</dbReference>
<dbReference type="Pfam" id="PF21096">
    <property type="entry name" value="RecA_C"/>
    <property type="match status" value="1"/>
</dbReference>
<dbReference type="PRINTS" id="PR00142">
    <property type="entry name" value="RECA"/>
</dbReference>
<dbReference type="SMART" id="SM00382">
    <property type="entry name" value="AAA"/>
    <property type="match status" value="1"/>
</dbReference>
<dbReference type="SUPFAM" id="SSF52540">
    <property type="entry name" value="P-loop containing nucleoside triphosphate hydrolases"/>
    <property type="match status" value="1"/>
</dbReference>
<dbReference type="SUPFAM" id="SSF54752">
    <property type="entry name" value="RecA protein, C-terminal domain"/>
    <property type="match status" value="1"/>
</dbReference>
<dbReference type="PROSITE" id="PS00321">
    <property type="entry name" value="RECA_1"/>
    <property type="match status" value="1"/>
</dbReference>
<dbReference type="PROSITE" id="PS50162">
    <property type="entry name" value="RECA_2"/>
    <property type="match status" value="1"/>
</dbReference>
<dbReference type="PROSITE" id="PS50163">
    <property type="entry name" value="RECA_3"/>
    <property type="match status" value="1"/>
</dbReference>
<proteinExistence type="inferred from homology"/>
<sequence length="353" mass="37983">MDQNKQKALAAALGQIEKQFGKGSIMRLGDSKTMDIEAISTGSLSLDVALGIGGLPCGRIVEIYGPESSGKTTLTLQVIAEAQKKGKVCAFIDAEHALDPIYAAKLGVNVDDLLISQPDTGEQALEICDMLVRSNAVDVIIVDSVAALTPKAEIEGEMGDSHVGLQARLMSQALRKLTANIKNANCLCIFINQIRMKIGVMFGSPETTTGGNALKFYASVRLDIRRIGAIKEGDEVVGNETRVKVVKNKVAPPFKQAEFQIFYGVGISKEGELVDLGVKHKLIDKAGAWYSYNGEKIGQGKANVMKLFTENKVMAAEVEARLRELLLSGDVPAEKPVVADADELEAESEQEFE</sequence>
<name>RECA_AERS4</name>
<keyword id="KW-0067">ATP-binding</keyword>
<keyword id="KW-0963">Cytoplasm</keyword>
<keyword id="KW-0227">DNA damage</keyword>
<keyword id="KW-0233">DNA recombination</keyword>
<keyword id="KW-0234">DNA repair</keyword>
<keyword id="KW-0238">DNA-binding</keyword>
<keyword id="KW-0547">Nucleotide-binding</keyword>
<keyword id="KW-0742">SOS response</keyword>
<evidence type="ECO:0000255" key="1">
    <source>
        <dbReference type="HAMAP-Rule" id="MF_00268"/>
    </source>
</evidence>
<evidence type="ECO:0000305" key="2"/>
<organism>
    <name type="scientific">Aeromonas salmonicida (strain A449)</name>
    <dbReference type="NCBI Taxonomy" id="382245"/>
    <lineage>
        <taxon>Bacteria</taxon>
        <taxon>Pseudomonadati</taxon>
        <taxon>Pseudomonadota</taxon>
        <taxon>Gammaproteobacteria</taxon>
        <taxon>Aeromonadales</taxon>
        <taxon>Aeromonadaceae</taxon>
        <taxon>Aeromonas</taxon>
    </lineage>
</organism>
<protein>
    <recommendedName>
        <fullName evidence="1">Protein RecA</fullName>
    </recommendedName>
    <alternativeName>
        <fullName evidence="1">Recombinase A</fullName>
    </alternativeName>
</protein>
<feature type="chain" id="PRO_0000122635" description="Protein RecA">
    <location>
        <begin position="1"/>
        <end position="353"/>
    </location>
</feature>
<feature type="binding site" evidence="1">
    <location>
        <begin position="65"/>
        <end position="72"/>
    </location>
    <ligand>
        <name>ATP</name>
        <dbReference type="ChEBI" id="CHEBI:30616"/>
    </ligand>
</feature>
<feature type="sequence conflict" description="In Ref. 1; AAB41053." evidence="2" ref="1">
    <original>R</original>
    <variation>L</variation>
    <location>
        <position position="27"/>
    </location>
</feature>
<feature type="sequence conflict" description="In Ref. 1; AAB41053." evidence="2" ref="1">
    <original>P</original>
    <variation>S</variation>
    <location>
        <position position="118"/>
    </location>
</feature>
<reference key="1">
    <citation type="journal article" date="1996" name="Gene">
        <title>Cloning, characterization and expression of the recA gene of Aeromonas salmonicida.</title>
        <authorList>
            <person name="Umelo E."/>
            <person name="Noonan B."/>
            <person name="Trust T.J."/>
        </authorList>
    </citation>
    <scope>NUCLEOTIDE SEQUENCE [GENOMIC DNA]</scope>
</reference>
<reference key="2">
    <citation type="journal article" date="2008" name="BMC Genomics">
        <title>The genome of Aeromonas salmonicida subsp. salmonicida A449: insights into the evolution of a fish pathogen.</title>
        <authorList>
            <person name="Reith M.E."/>
            <person name="Singh R.K."/>
            <person name="Curtis B."/>
            <person name="Boyd J.M."/>
            <person name="Bouevitch A."/>
            <person name="Kimball J."/>
            <person name="Munholland J."/>
            <person name="Murphy C."/>
            <person name="Sarty D."/>
            <person name="Williams J."/>
            <person name="Nash J.H."/>
            <person name="Johnson S.C."/>
            <person name="Brown L.L."/>
        </authorList>
    </citation>
    <scope>NUCLEOTIDE SEQUENCE [LARGE SCALE GENOMIC DNA]</scope>
    <source>
        <strain>A449</strain>
    </source>
</reference>
<comment type="function">
    <text>Can catalyze the hydrolysis of ATP in the presence of single-stranded DNA, the ATP-dependent uptake of single-stranded DNA by duplex DNA, and the ATP-dependent hybridization of homologous single-stranded DNAs. It interacts with LexA causing its activation and leading to its autocatalytic cleavage.</text>
</comment>
<comment type="subcellular location">
    <subcellularLocation>
        <location evidence="1">Cytoplasm</location>
    </subcellularLocation>
</comment>
<comment type="similarity">
    <text evidence="1">Belongs to the RecA family.</text>
</comment>
<gene>
    <name evidence="1" type="primary">recA</name>
    <name type="ordered locus">ASA_3809</name>
</gene>